<proteinExistence type="evidence at protein level"/>
<comment type="function">
    <text>Sulfated glycoprotein widely distributed in basement membranes and tightly associated with laminin. Also binds to collagen IV and perlecan. It probably has a role in cell-extracellular matrix interactions.</text>
</comment>
<comment type="subunit">
    <text evidence="2 9">Interacts with FBLN1 (By similarity). Interacts with LGALS3BP (By similarity). Interacts with PLXDC1 (PubMed:16574105). Interacts with SVEP1 (By similarity).</text>
</comment>
<comment type="subcellular location">
    <subcellularLocation>
        <location>Secreted</location>
        <location>Extracellular space</location>
        <location>Extracellular matrix</location>
        <location>Basement membrane</location>
    </subcellularLocation>
</comment>
<comment type="alternative products">
    <event type="alternative splicing"/>
    <isoform>
        <id>P14543-1</id>
        <name>1</name>
        <sequence type="displayed"/>
    </isoform>
    <isoform>
        <id>P14543-2</id>
        <name>2</name>
        <sequence type="described" ref="VSP_017254"/>
    </isoform>
</comment>
<comment type="PTM">
    <text>N- and O-glycosylated.</text>
</comment>
<protein>
    <recommendedName>
        <fullName>Nidogen-1</fullName>
        <shortName>NID-1</shortName>
    </recommendedName>
    <alternativeName>
        <fullName>Entactin</fullName>
    </alternativeName>
</protein>
<name>NID1_HUMAN</name>
<dbReference type="EMBL" id="M30269">
    <property type="protein sequence ID" value="AAA59932.1"/>
    <property type="molecule type" value="mRNA"/>
</dbReference>
<dbReference type="EMBL" id="X82245">
    <property type="protein sequence ID" value="CAA57709.1"/>
    <property type="molecule type" value="Genomic_DNA"/>
</dbReference>
<dbReference type="EMBL" id="X84819">
    <property type="protein sequence ID" value="CAA57709.1"/>
    <property type="status" value="JOINED"/>
    <property type="molecule type" value="Genomic_DNA"/>
</dbReference>
<dbReference type="EMBL" id="X84820">
    <property type="protein sequence ID" value="CAA57709.1"/>
    <property type="status" value="JOINED"/>
    <property type="molecule type" value="Genomic_DNA"/>
</dbReference>
<dbReference type="EMBL" id="X84821">
    <property type="protein sequence ID" value="CAA57709.1"/>
    <property type="status" value="JOINED"/>
    <property type="molecule type" value="Genomic_DNA"/>
</dbReference>
<dbReference type="EMBL" id="X84822">
    <property type="protein sequence ID" value="CAA57709.1"/>
    <property type="status" value="JOINED"/>
    <property type="molecule type" value="Genomic_DNA"/>
</dbReference>
<dbReference type="EMBL" id="X84823">
    <property type="protein sequence ID" value="CAA57709.1"/>
    <property type="status" value="JOINED"/>
    <property type="molecule type" value="Genomic_DNA"/>
</dbReference>
<dbReference type="EMBL" id="X84824">
    <property type="protein sequence ID" value="CAA57709.1"/>
    <property type="status" value="JOINED"/>
    <property type="molecule type" value="Genomic_DNA"/>
</dbReference>
<dbReference type="EMBL" id="X84825">
    <property type="protein sequence ID" value="CAA57709.1"/>
    <property type="status" value="JOINED"/>
    <property type="molecule type" value="Genomic_DNA"/>
</dbReference>
<dbReference type="EMBL" id="X84826">
    <property type="protein sequence ID" value="CAA57709.1"/>
    <property type="status" value="JOINED"/>
    <property type="molecule type" value="Genomic_DNA"/>
</dbReference>
<dbReference type="EMBL" id="X84827">
    <property type="protein sequence ID" value="CAA57709.1"/>
    <property type="status" value="JOINED"/>
    <property type="molecule type" value="Genomic_DNA"/>
</dbReference>
<dbReference type="EMBL" id="X84828">
    <property type="protein sequence ID" value="CAA57709.1"/>
    <property type="status" value="JOINED"/>
    <property type="molecule type" value="Genomic_DNA"/>
</dbReference>
<dbReference type="EMBL" id="X84829">
    <property type="protein sequence ID" value="CAA57709.1"/>
    <property type="status" value="JOINED"/>
    <property type="molecule type" value="Genomic_DNA"/>
</dbReference>
<dbReference type="EMBL" id="X84830">
    <property type="protein sequence ID" value="CAA57709.1"/>
    <property type="status" value="JOINED"/>
    <property type="molecule type" value="Genomic_DNA"/>
</dbReference>
<dbReference type="EMBL" id="X84831">
    <property type="protein sequence ID" value="CAA57709.1"/>
    <property type="status" value="JOINED"/>
    <property type="molecule type" value="Genomic_DNA"/>
</dbReference>
<dbReference type="EMBL" id="X84832">
    <property type="protein sequence ID" value="CAA57709.1"/>
    <property type="status" value="JOINED"/>
    <property type="molecule type" value="Genomic_DNA"/>
</dbReference>
<dbReference type="EMBL" id="X84833">
    <property type="protein sequence ID" value="CAA57709.1"/>
    <property type="status" value="JOINED"/>
    <property type="molecule type" value="Genomic_DNA"/>
</dbReference>
<dbReference type="EMBL" id="X84834">
    <property type="protein sequence ID" value="CAA57709.1"/>
    <property type="status" value="JOINED"/>
    <property type="molecule type" value="Genomic_DNA"/>
</dbReference>
<dbReference type="EMBL" id="X84835">
    <property type="protein sequence ID" value="CAA57709.1"/>
    <property type="status" value="JOINED"/>
    <property type="molecule type" value="Genomic_DNA"/>
</dbReference>
<dbReference type="EMBL" id="X84836">
    <property type="protein sequence ID" value="CAA57709.1"/>
    <property type="status" value="JOINED"/>
    <property type="molecule type" value="Genomic_DNA"/>
</dbReference>
<dbReference type="EMBL" id="X84837">
    <property type="protein sequence ID" value="CAA57709.1"/>
    <property type="status" value="JOINED"/>
    <property type="molecule type" value="Genomic_DNA"/>
</dbReference>
<dbReference type="EMBL" id="AL122018">
    <property type="status" value="NOT_ANNOTATED_CDS"/>
    <property type="molecule type" value="Genomic_DNA"/>
</dbReference>
<dbReference type="EMBL" id="AL139161">
    <property type="status" value="NOT_ANNOTATED_CDS"/>
    <property type="molecule type" value="Genomic_DNA"/>
</dbReference>
<dbReference type="EMBL" id="BC045606">
    <property type="protein sequence ID" value="AAH45606.1"/>
    <property type="molecule type" value="mRNA"/>
</dbReference>
<dbReference type="EMBL" id="AB209448">
    <property type="protein sequence ID" value="BAD92685.1"/>
    <property type="molecule type" value="mRNA"/>
</dbReference>
<dbReference type="EMBL" id="M27445">
    <property type="protein sequence ID" value="AAA57261.1"/>
    <property type="molecule type" value="mRNA"/>
</dbReference>
<dbReference type="CCDS" id="CCDS1608.1">
    <molecule id="P14543-1"/>
</dbReference>
<dbReference type="PIR" id="A33322">
    <property type="entry name" value="MMHUND"/>
</dbReference>
<dbReference type="RefSeq" id="NP_002499.2">
    <molecule id="P14543-1"/>
    <property type="nucleotide sequence ID" value="NM_002508.3"/>
</dbReference>
<dbReference type="SMR" id="P14543"/>
<dbReference type="BioGRID" id="110876">
    <property type="interactions" value="32"/>
</dbReference>
<dbReference type="ComplexPortal" id="CPX-1265">
    <property type="entry name" value="Laminin111-nidogen complex"/>
</dbReference>
<dbReference type="ComplexPortal" id="CPX-1282">
    <property type="entry name" value="Laminin211-nidogen complex"/>
</dbReference>
<dbReference type="ComplexPortal" id="CPX-1285">
    <property type="entry name" value="Laminin221-nidogen complex"/>
</dbReference>
<dbReference type="FunCoup" id="P14543">
    <property type="interactions" value="456"/>
</dbReference>
<dbReference type="IntAct" id="P14543">
    <property type="interactions" value="26"/>
</dbReference>
<dbReference type="MINT" id="P14543"/>
<dbReference type="STRING" id="9606.ENSP00000264187"/>
<dbReference type="DrugBank" id="DB00013">
    <property type="generic name" value="Urokinase"/>
</dbReference>
<dbReference type="GlyCosmos" id="P14543">
    <property type="glycosylation" value="9 sites, 4 glycans"/>
</dbReference>
<dbReference type="GlyGen" id="P14543">
    <property type="glycosylation" value="16 sites, 6 O-linked glycans (15 sites)"/>
</dbReference>
<dbReference type="iPTMnet" id="P14543"/>
<dbReference type="PhosphoSitePlus" id="P14543"/>
<dbReference type="SwissPalm" id="P14543"/>
<dbReference type="BioMuta" id="NID1"/>
<dbReference type="DMDM" id="251757450"/>
<dbReference type="jPOST" id="P14543"/>
<dbReference type="MassIVE" id="P14543"/>
<dbReference type="PaxDb" id="9606-ENSP00000264187"/>
<dbReference type="PeptideAtlas" id="P14543"/>
<dbReference type="ProteomicsDB" id="53056">
    <molecule id="P14543-1"/>
</dbReference>
<dbReference type="ProteomicsDB" id="53057">
    <molecule id="P14543-2"/>
</dbReference>
<dbReference type="Pumba" id="P14543"/>
<dbReference type="Antibodypedia" id="4102">
    <property type="antibodies" value="451 antibodies from 38 providers"/>
</dbReference>
<dbReference type="DNASU" id="4811"/>
<dbReference type="Ensembl" id="ENST00000264187.7">
    <molecule id="P14543-1"/>
    <property type="protein sequence ID" value="ENSP00000264187.6"/>
    <property type="gene ID" value="ENSG00000116962.15"/>
</dbReference>
<dbReference type="Ensembl" id="ENST00000366595.7">
    <molecule id="P14543-2"/>
    <property type="protein sequence ID" value="ENSP00000355554.3"/>
    <property type="gene ID" value="ENSG00000116962.15"/>
</dbReference>
<dbReference type="GeneID" id="4811"/>
<dbReference type="KEGG" id="hsa:4811"/>
<dbReference type="MANE-Select" id="ENST00000264187.7">
    <property type="protein sequence ID" value="ENSP00000264187.6"/>
    <property type="RefSeq nucleotide sequence ID" value="NM_002508.3"/>
    <property type="RefSeq protein sequence ID" value="NP_002499.2"/>
</dbReference>
<dbReference type="UCSC" id="uc001hxo.4">
    <molecule id="P14543-1"/>
    <property type="organism name" value="human"/>
</dbReference>
<dbReference type="AGR" id="HGNC:7821"/>
<dbReference type="CTD" id="4811"/>
<dbReference type="DisGeNET" id="4811"/>
<dbReference type="GeneCards" id="NID1"/>
<dbReference type="HGNC" id="HGNC:7821">
    <property type="gene designation" value="NID1"/>
</dbReference>
<dbReference type="HPA" id="ENSG00000116962">
    <property type="expression patterns" value="Tissue enhanced (placenta)"/>
</dbReference>
<dbReference type="MalaCards" id="NID1"/>
<dbReference type="MIM" id="131390">
    <property type="type" value="gene"/>
</dbReference>
<dbReference type="neXtProt" id="NX_P14543"/>
<dbReference type="OpenTargets" id="ENSG00000116962"/>
<dbReference type="Orphanet" id="269215">
    <property type="disease" value="Isolated Dandy-Walker malformation without hydrocephalus"/>
</dbReference>
<dbReference type="PharmGKB" id="PA31625"/>
<dbReference type="VEuPathDB" id="HostDB:ENSG00000116962"/>
<dbReference type="eggNOG" id="KOG1214">
    <property type="taxonomic scope" value="Eukaryota"/>
</dbReference>
<dbReference type="GeneTree" id="ENSGT00940000156318"/>
<dbReference type="HOGENOM" id="CLU_003163_1_0_1"/>
<dbReference type="InParanoid" id="P14543"/>
<dbReference type="OMA" id="PGTGNQF"/>
<dbReference type="OrthoDB" id="9990982at2759"/>
<dbReference type="PAN-GO" id="P14543">
    <property type="GO annotations" value="1 GO annotation based on evolutionary models"/>
</dbReference>
<dbReference type="PhylomeDB" id="P14543"/>
<dbReference type="TreeFam" id="TF320666"/>
<dbReference type="PathwayCommons" id="P14543"/>
<dbReference type="Reactome" id="R-HSA-1474228">
    <property type="pathway name" value="Degradation of the extracellular matrix"/>
</dbReference>
<dbReference type="Reactome" id="R-HSA-3000157">
    <property type="pathway name" value="Laminin interactions"/>
</dbReference>
<dbReference type="SignaLink" id="P14543"/>
<dbReference type="SIGNOR" id="P14543"/>
<dbReference type="BioGRID-ORCS" id="4811">
    <property type="hits" value="12 hits in 1161 CRISPR screens"/>
</dbReference>
<dbReference type="ChiTaRS" id="NID1">
    <property type="organism name" value="human"/>
</dbReference>
<dbReference type="GeneWiki" id="Entactin"/>
<dbReference type="GenomeRNAi" id="4811"/>
<dbReference type="Pharos" id="P14543">
    <property type="development level" value="Tbio"/>
</dbReference>
<dbReference type="PRO" id="PR:P14543"/>
<dbReference type="Proteomes" id="UP000005640">
    <property type="component" value="Chromosome 1"/>
</dbReference>
<dbReference type="RNAct" id="P14543">
    <property type="molecule type" value="protein"/>
</dbReference>
<dbReference type="Bgee" id="ENSG00000116962">
    <property type="expression patterns" value="Expressed in stromal cell of endometrium and 182 other cell types or tissues"/>
</dbReference>
<dbReference type="GO" id="GO:0005604">
    <property type="term" value="C:basement membrane"/>
    <property type="evidence" value="ECO:0000314"/>
    <property type="project" value="BHF-UCL"/>
</dbReference>
<dbReference type="GO" id="GO:0062023">
    <property type="term" value="C:collagen-containing extracellular matrix"/>
    <property type="evidence" value="ECO:0007005"/>
    <property type="project" value="UniProtKB"/>
</dbReference>
<dbReference type="GO" id="GO:0070062">
    <property type="term" value="C:extracellular exosome"/>
    <property type="evidence" value="ECO:0007005"/>
    <property type="project" value="UniProtKB"/>
</dbReference>
<dbReference type="GO" id="GO:0005576">
    <property type="term" value="C:extracellular region"/>
    <property type="evidence" value="ECO:0000304"/>
    <property type="project" value="Reactome"/>
</dbReference>
<dbReference type="GO" id="GO:0098637">
    <property type="term" value="C:protein complex involved in cell-matrix adhesion"/>
    <property type="evidence" value="ECO:0000303"/>
    <property type="project" value="ComplexPortal"/>
</dbReference>
<dbReference type="GO" id="GO:0005509">
    <property type="term" value="F:calcium ion binding"/>
    <property type="evidence" value="ECO:0007669"/>
    <property type="project" value="InterPro"/>
</dbReference>
<dbReference type="GO" id="GO:0005518">
    <property type="term" value="F:collagen binding"/>
    <property type="evidence" value="ECO:0000314"/>
    <property type="project" value="BHF-UCL"/>
</dbReference>
<dbReference type="GO" id="GO:0005201">
    <property type="term" value="F:extracellular matrix structural constituent"/>
    <property type="evidence" value="ECO:0000250"/>
    <property type="project" value="BHF-UCL"/>
</dbReference>
<dbReference type="GO" id="GO:0043236">
    <property type="term" value="F:laminin binding"/>
    <property type="evidence" value="ECO:0000314"/>
    <property type="project" value="BHF-UCL"/>
</dbReference>
<dbReference type="GO" id="GO:0043237">
    <property type="term" value="F:laminin-1 binding"/>
    <property type="evidence" value="ECO:0007669"/>
    <property type="project" value="Ensembl"/>
</dbReference>
<dbReference type="GO" id="GO:0043394">
    <property type="term" value="F:proteoglycan binding"/>
    <property type="evidence" value="ECO:0000353"/>
    <property type="project" value="BHF-UCL"/>
</dbReference>
<dbReference type="GO" id="GO:0071711">
    <property type="term" value="P:basement membrane organization"/>
    <property type="evidence" value="ECO:0000304"/>
    <property type="project" value="BHF-UCL"/>
</dbReference>
<dbReference type="GO" id="GO:0007160">
    <property type="term" value="P:cell-matrix adhesion"/>
    <property type="evidence" value="ECO:0007669"/>
    <property type="project" value="Ensembl"/>
</dbReference>
<dbReference type="GO" id="GO:0032836">
    <property type="term" value="P:glomerular basement membrane development"/>
    <property type="evidence" value="ECO:0007669"/>
    <property type="project" value="Ensembl"/>
</dbReference>
<dbReference type="GO" id="GO:0045785">
    <property type="term" value="P:positive regulation of cell adhesion"/>
    <property type="evidence" value="ECO:0000303"/>
    <property type="project" value="ComplexPortal"/>
</dbReference>
<dbReference type="GO" id="GO:0010811">
    <property type="term" value="P:positive regulation of cell-substrate adhesion"/>
    <property type="evidence" value="ECO:0007669"/>
    <property type="project" value="Ensembl"/>
</dbReference>
<dbReference type="GO" id="GO:2001046">
    <property type="term" value="P:positive regulation of integrin-mediated signaling pathway"/>
    <property type="evidence" value="ECO:0000303"/>
    <property type="project" value="ComplexPortal"/>
</dbReference>
<dbReference type="GO" id="GO:0051149">
    <property type="term" value="P:positive regulation of muscle cell differentiation"/>
    <property type="evidence" value="ECO:0000303"/>
    <property type="project" value="ComplexPortal"/>
</dbReference>
<dbReference type="GO" id="GO:0110011">
    <property type="term" value="P:regulation of basement membrane organization"/>
    <property type="evidence" value="ECO:0000303"/>
    <property type="project" value="ComplexPortal"/>
</dbReference>
<dbReference type="CDD" id="cd00054">
    <property type="entry name" value="EGF_CA"/>
    <property type="match status" value="4"/>
</dbReference>
<dbReference type="CDD" id="cd00255">
    <property type="entry name" value="nidG2"/>
    <property type="match status" value="1"/>
</dbReference>
<dbReference type="CDD" id="cd00191">
    <property type="entry name" value="TY"/>
    <property type="match status" value="1"/>
</dbReference>
<dbReference type="FunFam" id="2.10.25.10:FF:000270">
    <property type="entry name" value="Nidogen 1"/>
    <property type="match status" value="1"/>
</dbReference>
<dbReference type="FunFam" id="2.10.25.10:FF:000281">
    <property type="entry name" value="Nidogen 1"/>
    <property type="match status" value="1"/>
</dbReference>
<dbReference type="FunFam" id="2.10.25.10:FF:000297">
    <property type="entry name" value="Nidogen 1"/>
    <property type="match status" value="1"/>
</dbReference>
<dbReference type="FunFam" id="2.120.10.30:FF:000030">
    <property type="entry name" value="Nidogen 1"/>
    <property type="match status" value="1"/>
</dbReference>
<dbReference type="FunFam" id="2.40.155.10:FF:000001">
    <property type="entry name" value="Nidogen 1"/>
    <property type="match status" value="1"/>
</dbReference>
<dbReference type="FunFam" id="2.10.25.10:FF:000666">
    <property type="entry name" value="nidogen-1"/>
    <property type="match status" value="1"/>
</dbReference>
<dbReference type="FunFam" id="4.10.800.10:FF:000001">
    <property type="entry name" value="Testican-3 isoform 2"/>
    <property type="match status" value="1"/>
</dbReference>
<dbReference type="Gene3D" id="2.40.155.10">
    <property type="entry name" value="Green fluorescent protein"/>
    <property type="match status" value="1"/>
</dbReference>
<dbReference type="Gene3D" id="2.10.25.10">
    <property type="entry name" value="Laminin"/>
    <property type="match status" value="5"/>
</dbReference>
<dbReference type="Gene3D" id="4.10.800.10">
    <property type="entry name" value="Thyroglobulin type-1"/>
    <property type="match status" value="1"/>
</dbReference>
<dbReference type="Gene3D" id="2.120.10.30">
    <property type="entry name" value="TolB, C-terminal domain"/>
    <property type="match status" value="1"/>
</dbReference>
<dbReference type="InterPro" id="IPR011042">
    <property type="entry name" value="6-blade_b-propeller_TolB-like"/>
</dbReference>
<dbReference type="InterPro" id="IPR026823">
    <property type="entry name" value="cEGF"/>
</dbReference>
<dbReference type="InterPro" id="IPR050778">
    <property type="entry name" value="Cueball_EGF_LRP_Nidogen"/>
</dbReference>
<dbReference type="InterPro" id="IPR001881">
    <property type="entry name" value="EGF-like_Ca-bd_dom"/>
</dbReference>
<dbReference type="InterPro" id="IPR000742">
    <property type="entry name" value="EGF-like_dom"/>
</dbReference>
<dbReference type="InterPro" id="IPR000152">
    <property type="entry name" value="EGF-type_Asp/Asn_hydroxyl_site"/>
</dbReference>
<dbReference type="InterPro" id="IPR018097">
    <property type="entry name" value="EGF_Ca-bd_CS"/>
</dbReference>
<dbReference type="InterPro" id="IPR024731">
    <property type="entry name" value="EGF_dom"/>
</dbReference>
<dbReference type="InterPro" id="IPR006605">
    <property type="entry name" value="G2_nidogen/fibulin_G2F"/>
</dbReference>
<dbReference type="InterPro" id="IPR009017">
    <property type="entry name" value="GFP"/>
</dbReference>
<dbReference type="InterPro" id="IPR009030">
    <property type="entry name" value="Growth_fac_rcpt_cys_sf"/>
</dbReference>
<dbReference type="InterPro" id="IPR000033">
    <property type="entry name" value="LDLR_classB_rpt"/>
</dbReference>
<dbReference type="InterPro" id="IPR003886">
    <property type="entry name" value="NIDO_dom"/>
</dbReference>
<dbReference type="InterPro" id="IPR049883">
    <property type="entry name" value="NOTCH1_EGF-like"/>
</dbReference>
<dbReference type="InterPro" id="IPR000716">
    <property type="entry name" value="Thyroglobulin_1"/>
</dbReference>
<dbReference type="InterPro" id="IPR036857">
    <property type="entry name" value="Thyroglobulin_1_sf"/>
</dbReference>
<dbReference type="PANTHER" id="PTHR46513:SF6">
    <property type="entry name" value="NIDOGEN-1"/>
    <property type="match status" value="1"/>
</dbReference>
<dbReference type="PANTHER" id="PTHR46513">
    <property type="entry name" value="VITELLOGENIN RECEPTOR-LIKE PROTEIN-RELATED-RELATED"/>
    <property type="match status" value="1"/>
</dbReference>
<dbReference type="Pfam" id="PF12662">
    <property type="entry name" value="cEGF"/>
    <property type="match status" value="1"/>
</dbReference>
<dbReference type="Pfam" id="PF12947">
    <property type="entry name" value="EGF_3"/>
    <property type="match status" value="2"/>
</dbReference>
<dbReference type="Pfam" id="PF07645">
    <property type="entry name" value="EGF_CA"/>
    <property type="match status" value="1"/>
</dbReference>
<dbReference type="Pfam" id="PF14670">
    <property type="entry name" value="FXa_inhibition"/>
    <property type="match status" value="1"/>
</dbReference>
<dbReference type="Pfam" id="PF07474">
    <property type="entry name" value="G2F"/>
    <property type="match status" value="1"/>
</dbReference>
<dbReference type="Pfam" id="PF00058">
    <property type="entry name" value="Ldl_recept_b"/>
    <property type="match status" value="3"/>
</dbReference>
<dbReference type="Pfam" id="PF06119">
    <property type="entry name" value="NIDO"/>
    <property type="match status" value="1"/>
</dbReference>
<dbReference type="Pfam" id="PF00086">
    <property type="entry name" value="Thyroglobulin_1"/>
    <property type="match status" value="1"/>
</dbReference>
<dbReference type="SMART" id="SM00181">
    <property type="entry name" value="EGF"/>
    <property type="match status" value="6"/>
</dbReference>
<dbReference type="SMART" id="SM00179">
    <property type="entry name" value="EGF_CA"/>
    <property type="match status" value="4"/>
</dbReference>
<dbReference type="SMART" id="SM00682">
    <property type="entry name" value="G2F"/>
    <property type="match status" value="1"/>
</dbReference>
<dbReference type="SMART" id="SM00135">
    <property type="entry name" value="LY"/>
    <property type="match status" value="5"/>
</dbReference>
<dbReference type="SMART" id="SM00539">
    <property type="entry name" value="NIDO"/>
    <property type="match status" value="1"/>
</dbReference>
<dbReference type="SMART" id="SM00211">
    <property type="entry name" value="TY"/>
    <property type="match status" value="1"/>
</dbReference>
<dbReference type="SUPFAM" id="SSF54511">
    <property type="entry name" value="GFP-like"/>
    <property type="match status" value="1"/>
</dbReference>
<dbReference type="SUPFAM" id="SSF57184">
    <property type="entry name" value="Growth factor receptor domain"/>
    <property type="match status" value="2"/>
</dbReference>
<dbReference type="SUPFAM" id="SSF57610">
    <property type="entry name" value="Thyroglobulin type-1 domain"/>
    <property type="match status" value="1"/>
</dbReference>
<dbReference type="SUPFAM" id="SSF63825">
    <property type="entry name" value="YWTD domain"/>
    <property type="match status" value="1"/>
</dbReference>
<dbReference type="PROSITE" id="PS00010">
    <property type="entry name" value="ASX_HYDROXYL"/>
    <property type="match status" value="3"/>
</dbReference>
<dbReference type="PROSITE" id="PS00022">
    <property type="entry name" value="EGF_1"/>
    <property type="match status" value="1"/>
</dbReference>
<dbReference type="PROSITE" id="PS01186">
    <property type="entry name" value="EGF_2"/>
    <property type="match status" value="5"/>
</dbReference>
<dbReference type="PROSITE" id="PS50026">
    <property type="entry name" value="EGF_3"/>
    <property type="match status" value="5"/>
</dbReference>
<dbReference type="PROSITE" id="PS01187">
    <property type="entry name" value="EGF_CA"/>
    <property type="match status" value="2"/>
</dbReference>
<dbReference type="PROSITE" id="PS51120">
    <property type="entry name" value="LDLRB"/>
    <property type="match status" value="4"/>
</dbReference>
<dbReference type="PROSITE" id="PS51220">
    <property type="entry name" value="NIDO"/>
    <property type="match status" value="1"/>
</dbReference>
<dbReference type="PROSITE" id="PS50993">
    <property type="entry name" value="NIDOGEN_G2"/>
    <property type="match status" value="1"/>
</dbReference>
<dbReference type="PROSITE" id="PS00484">
    <property type="entry name" value="THYROGLOBULIN_1_1"/>
    <property type="match status" value="1"/>
</dbReference>
<dbReference type="PROSITE" id="PS51162">
    <property type="entry name" value="THYROGLOBULIN_1_2"/>
    <property type="match status" value="1"/>
</dbReference>
<keyword id="KW-0025">Alternative splicing</keyword>
<keyword id="KW-0084">Basement membrane</keyword>
<keyword id="KW-0106">Calcium</keyword>
<keyword id="KW-0130">Cell adhesion</keyword>
<keyword id="KW-1015">Disulfide bond</keyword>
<keyword id="KW-0245">EGF-like domain</keyword>
<keyword id="KW-0272">Extracellular matrix</keyword>
<keyword id="KW-0325">Glycoprotein</keyword>
<keyword id="KW-1267">Proteomics identification</keyword>
<keyword id="KW-1185">Reference proteome</keyword>
<keyword id="KW-0677">Repeat</keyword>
<keyword id="KW-0964">Secreted</keyword>
<keyword id="KW-0732">Signal</keyword>
<keyword id="KW-0765">Sulfation</keyword>
<feature type="signal peptide">
    <location>
        <begin position="1"/>
        <end position="28"/>
    </location>
</feature>
<feature type="chain" id="PRO_0000007669" description="Nidogen-1">
    <location>
        <begin position="29"/>
        <end position="1247"/>
    </location>
</feature>
<feature type="domain" description="NIDO" evidence="7">
    <location>
        <begin position="106"/>
        <end position="268"/>
    </location>
</feature>
<feature type="domain" description="EGF-like 1" evidence="4">
    <location>
        <begin position="386"/>
        <end position="426"/>
    </location>
</feature>
<feature type="domain" description="Nidogen G2 beta-barrel" evidence="5">
    <location>
        <begin position="430"/>
        <end position="667"/>
    </location>
</feature>
<feature type="domain" description="EGF-like 2" evidence="4">
    <location>
        <begin position="668"/>
        <end position="709"/>
    </location>
</feature>
<feature type="domain" description="EGF-like 3; calcium-binding" evidence="4">
    <location>
        <begin position="710"/>
        <end position="751"/>
    </location>
</feature>
<feature type="domain" description="EGF-like 4" evidence="4">
    <location>
        <begin position="758"/>
        <end position="801"/>
    </location>
</feature>
<feature type="domain" description="EGF-like 5; calcium-binding" evidence="4">
    <location>
        <begin position="802"/>
        <end position="840"/>
    </location>
</feature>
<feature type="domain" description="Thyroglobulin type-1" evidence="6">
    <location>
        <begin position="846"/>
        <end position="919"/>
    </location>
</feature>
<feature type="repeat" description="LDL-receptor class B 1">
    <location>
        <begin position="990"/>
        <end position="1032"/>
    </location>
</feature>
<feature type="repeat" description="LDL-receptor class B 2">
    <location>
        <begin position="1033"/>
        <end position="1075"/>
    </location>
</feature>
<feature type="repeat" description="LDL-receptor class B 3">
    <location>
        <begin position="1076"/>
        <end position="1120"/>
    </location>
</feature>
<feature type="repeat" description="LDL-receptor class B 4">
    <location>
        <begin position="1121"/>
        <end position="1162"/>
    </location>
</feature>
<feature type="domain" description="EGF-like 6" evidence="4">
    <location>
        <begin position="1208"/>
        <end position="1244"/>
    </location>
</feature>
<feature type="short sequence motif" description="Cell attachment site">
    <location>
        <begin position="702"/>
        <end position="704"/>
    </location>
</feature>
<feature type="modified residue" description="Sulfotyrosine" evidence="3">
    <location>
        <position position="289"/>
    </location>
</feature>
<feature type="modified residue" description="Sulfotyrosine" evidence="3">
    <location>
        <position position="296"/>
    </location>
</feature>
<feature type="glycosylation site" description="O-linked (GalNAc...) threonine" evidence="3">
    <location>
        <position position="922"/>
    </location>
</feature>
<feature type="glycosylation site" description="O-linked (GalNAc...) threonine" evidence="3">
    <location>
        <position position="935"/>
    </location>
</feature>
<feature type="disulfide bond" evidence="1">
    <location>
        <begin position="390"/>
        <end position="403"/>
    </location>
</feature>
<feature type="disulfide bond" evidence="1">
    <location>
        <begin position="397"/>
        <end position="412"/>
    </location>
</feature>
<feature type="disulfide bond" evidence="1">
    <location>
        <begin position="411"/>
        <end position="618"/>
    </location>
</feature>
<feature type="disulfide bond" evidence="1">
    <location>
        <begin position="414"/>
        <end position="425"/>
    </location>
</feature>
<feature type="disulfide bond" evidence="1">
    <location>
        <begin position="672"/>
        <end position="685"/>
    </location>
</feature>
<feature type="disulfide bond" evidence="1">
    <location>
        <begin position="679"/>
        <end position="695"/>
    </location>
</feature>
<feature type="disulfide bond" evidence="1">
    <location>
        <begin position="697"/>
        <end position="708"/>
    </location>
</feature>
<feature type="disulfide bond" evidence="1">
    <location>
        <begin position="714"/>
        <end position="727"/>
    </location>
</feature>
<feature type="disulfide bond" evidence="1">
    <location>
        <begin position="721"/>
        <end position="736"/>
    </location>
</feature>
<feature type="disulfide bond" evidence="1">
    <location>
        <begin position="738"/>
        <end position="750"/>
    </location>
</feature>
<feature type="disulfide bond" evidence="1">
    <location>
        <begin position="762"/>
        <end position="777"/>
    </location>
</feature>
<feature type="disulfide bond" evidence="1">
    <location>
        <begin position="769"/>
        <end position="787"/>
    </location>
</feature>
<feature type="disulfide bond" evidence="1">
    <location>
        <begin position="789"/>
        <end position="800"/>
    </location>
</feature>
<feature type="disulfide bond" evidence="1">
    <location>
        <begin position="806"/>
        <end position="817"/>
    </location>
</feature>
<feature type="disulfide bond" evidence="1">
    <location>
        <begin position="811"/>
        <end position="826"/>
    </location>
</feature>
<feature type="disulfide bond" evidence="1">
    <location>
        <begin position="828"/>
        <end position="839"/>
    </location>
</feature>
<feature type="disulfide bond" evidence="1">
    <location>
        <begin position="849"/>
        <end position="878"/>
    </location>
</feature>
<feature type="disulfide bond" evidence="1">
    <location>
        <begin position="889"/>
        <end position="896"/>
    </location>
</feature>
<feature type="disulfide bond" evidence="1">
    <location>
        <begin position="898"/>
        <end position="919"/>
    </location>
</feature>
<feature type="disulfide bond" evidence="1">
    <location>
        <begin position="1212"/>
        <end position="1223"/>
    </location>
</feature>
<feature type="disulfide bond" evidence="1">
    <location>
        <begin position="1219"/>
        <end position="1232"/>
    </location>
</feature>
<feature type="disulfide bond" evidence="1">
    <location>
        <begin position="1234"/>
        <end position="1243"/>
    </location>
</feature>
<feature type="splice variant" id="VSP_017254" description="In isoform 2." evidence="15 16">
    <location>
        <begin position="710"/>
        <end position="842"/>
    </location>
</feature>
<feature type="sequence variant" id="VAR_055760" description="In dbSNP:rs2071529.">
    <original>R</original>
    <variation>L</variation>
    <location>
        <position position="31"/>
    </location>
</feature>
<feature type="sequence variant" id="VAR_058123" description="In dbSNP:rs17857302." evidence="8">
    <original>S</original>
    <variation>R</variation>
    <location>
        <position position="60"/>
    </location>
</feature>
<feature type="sequence variant" id="VAR_024264" description="In dbSNP:rs10733133." evidence="8 12 13 14">
    <original>V</original>
    <variation>I</variation>
    <location>
        <position position="246"/>
    </location>
</feature>
<feature type="sequence variant" id="VAR_055761" description="In dbSNP:rs16833183.">
    <original>R</original>
    <variation>H</variation>
    <location>
        <position position="302"/>
    </location>
</feature>
<feature type="sequence variant" id="VAR_055762" description="In dbSNP:rs34406281.">
    <original>R</original>
    <variation>H</variation>
    <location>
        <position position="335"/>
    </location>
</feature>
<feature type="sequence variant" id="VAR_055763" description="In dbSNP:rs16833154.">
    <original>R</original>
    <variation>H</variation>
    <location>
        <position position="387"/>
    </location>
</feature>
<feature type="sequence variant" id="VAR_021904" description="In dbSNP:rs3738534.">
    <original>Q</original>
    <variation>R</variation>
    <location>
        <position position="669"/>
    </location>
</feature>
<feature type="sequence variant" id="VAR_058124" description="In dbSNP:rs3738531." evidence="14">
    <original>Q</original>
    <variation>H</variation>
    <location>
        <position position="807"/>
    </location>
</feature>
<feature type="sequence variant" id="VAR_055764" description="In dbSNP:rs16833060.">
    <original>K</original>
    <variation>E</variation>
    <location>
        <position position="970"/>
    </location>
</feature>
<feature type="sequence variant" id="VAR_035835" description="In a colorectal cancer sample; somatic mutation." evidence="10">
    <original>F</original>
    <variation>S</variation>
    <location>
        <position position="1036"/>
    </location>
</feature>
<feature type="sequence variant" id="VAR_055765" description="In dbSNP:rs16833032.">
    <original>L</original>
    <variation>V</variation>
    <location>
        <position position="1163"/>
    </location>
</feature>
<feature type="sequence variant" id="VAR_055766" description="In dbSNP:rs6662744.">
    <original>T</original>
    <variation>I</variation>
    <location>
        <position position="1226"/>
    </location>
</feature>
<feature type="sequence variant" id="VAR_058125" description="In dbSNP:rs3213190." evidence="11 12 13">
    <original>Q</original>
    <variation>R</variation>
    <location>
        <position position="1246"/>
    </location>
</feature>
<feature type="sequence conflict" description="In Ref. 2; CAA57709." evidence="17" ref="2">
    <original>EL</original>
    <variation>SS</variation>
    <location>
        <begin position="33"/>
        <end position="34"/>
    </location>
</feature>
<feature type="sequence conflict" description="In Ref. 2; CAA57709." evidence="17" ref="2">
    <original>FGPGQG</original>
    <variation>SAPDR</variation>
    <location>
        <begin position="37"/>
        <end position="42"/>
    </location>
</feature>
<feature type="sequence conflict" description="In Ref. 1; AAA59932 and 2; CAA57709." evidence="17" ref="1 2">
    <original>L</original>
    <variation>F</variation>
    <location>
        <position position="653"/>
    </location>
</feature>
<feature type="sequence conflict" description="In Ref. 1; AAA59932 and 2; CAA57709." evidence="17" ref="1 2">
    <original>T</original>
    <variation>H</variation>
    <location>
        <position position="1115"/>
    </location>
</feature>
<evidence type="ECO:0000250" key="1"/>
<evidence type="ECO:0000250" key="2">
    <source>
        <dbReference type="UniProtKB" id="P10493"/>
    </source>
</evidence>
<evidence type="ECO:0000255" key="3"/>
<evidence type="ECO:0000255" key="4">
    <source>
        <dbReference type="PROSITE-ProRule" id="PRU00076"/>
    </source>
</evidence>
<evidence type="ECO:0000255" key="5">
    <source>
        <dbReference type="PROSITE-ProRule" id="PRU00348"/>
    </source>
</evidence>
<evidence type="ECO:0000255" key="6">
    <source>
        <dbReference type="PROSITE-ProRule" id="PRU00500"/>
    </source>
</evidence>
<evidence type="ECO:0000255" key="7">
    <source>
        <dbReference type="PROSITE-ProRule" id="PRU00570"/>
    </source>
</evidence>
<evidence type="ECO:0000269" key="8">
    <source>
    </source>
</evidence>
<evidence type="ECO:0000269" key="9">
    <source>
    </source>
</evidence>
<evidence type="ECO:0000269" key="10">
    <source>
    </source>
</evidence>
<evidence type="ECO:0000269" key="11">
    <source>
    </source>
</evidence>
<evidence type="ECO:0000269" key="12">
    <source>
    </source>
</evidence>
<evidence type="ECO:0000269" key="13">
    <source>
    </source>
</evidence>
<evidence type="ECO:0000269" key="14">
    <source ref="6"/>
</evidence>
<evidence type="ECO:0000303" key="15">
    <source>
    </source>
</evidence>
<evidence type="ECO:0000303" key="16">
    <source ref="6"/>
</evidence>
<evidence type="ECO:0000305" key="17"/>
<reference key="1">
    <citation type="journal article" date="1989" name="DNA">
        <title>Human nidogen: complete amino acid sequence and structural domains deduced from cDNAs, and evidence for polymorphism of the gene.</title>
        <authorList>
            <person name="Nagayoshi T."/>
            <person name="Sanborn D."/>
            <person name="Hickok N.J."/>
            <person name="Olsen D.R."/>
            <person name="Fazio M.J."/>
            <person name="Chu M.-L."/>
            <person name="Knowlton R."/>
            <person name="Mann K."/>
            <person name="Deutzmann R."/>
            <person name="Timpl R."/>
            <person name="Uitto J."/>
        </authorList>
    </citation>
    <scope>NUCLEOTIDE SEQUENCE [MRNA] (ISOFORM 1)</scope>
    <scope>VARIANTS ILE-246 AND ARG-1246</scope>
</reference>
<reference key="2">
    <citation type="journal article" date="1995" name="Genomics">
        <title>Genomic sequences and structural organization of the human nidogen gene (NID).</title>
        <authorList>
            <person name="Zimmermann K."/>
            <person name="Hoischen S."/>
            <person name="Hafner M."/>
            <person name="Nischt R."/>
        </authorList>
    </citation>
    <scope>NUCLEOTIDE SEQUENCE [GENOMIC DNA]</scope>
    <scope>VARIANTS ILE-246 AND ARG-1246</scope>
</reference>
<reference key="3">
    <citation type="journal article" date="2006" name="Nature">
        <title>The DNA sequence and biological annotation of human chromosome 1.</title>
        <authorList>
            <person name="Gregory S.G."/>
            <person name="Barlow K.F."/>
            <person name="McLay K.E."/>
            <person name="Kaul R."/>
            <person name="Swarbreck D."/>
            <person name="Dunham A."/>
            <person name="Scott C.E."/>
            <person name="Howe K.L."/>
            <person name="Woodfine K."/>
            <person name="Spencer C.C.A."/>
            <person name="Jones M.C."/>
            <person name="Gillson C."/>
            <person name="Searle S."/>
            <person name="Zhou Y."/>
            <person name="Kokocinski F."/>
            <person name="McDonald L."/>
            <person name="Evans R."/>
            <person name="Phillips K."/>
            <person name="Atkinson A."/>
            <person name="Cooper R."/>
            <person name="Jones C."/>
            <person name="Hall R.E."/>
            <person name="Andrews T.D."/>
            <person name="Lloyd C."/>
            <person name="Ainscough R."/>
            <person name="Almeida J.P."/>
            <person name="Ambrose K.D."/>
            <person name="Anderson F."/>
            <person name="Andrew R.W."/>
            <person name="Ashwell R.I.S."/>
            <person name="Aubin K."/>
            <person name="Babbage A.K."/>
            <person name="Bagguley C.L."/>
            <person name="Bailey J."/>
            <person name="Beasley H."/>
            <person name="Bethel G."/>
            <person name="Bird C.P."/>
            <person name="Bray-Allen S."/>
            <person name="Brown J.Y."/>
            <person name="Brown A.J."/>
            <person name="Buckley D."/>
            <person name="Burton J."/>
            <person name="Bye J."/>
            <person name="Carder C."/>
            <person name="Chapman J.C."/>
            <person name="Clark S.Y."/>
            <person name="Clarke G."/>
            <person name="Clee C."/>
            <person name="Cobley V."/>
            <person name="Collier R.E."/>
            <person name="Corby N."/>
            <person name="Coville G.J."/>
            <person name="Davies J."/>
            <person name="Deadman R."/>
            <person name="Dunn M."/>
            <person name="Earthrowl M."/>
            <person name="Ellington A.G."/>
            <person name="Errington H."/>
            <person name="Frankish A."/>
            <person name="Frankland J."/>
            <person name="French L."/>
            <person name="Garner P."/>
            <person name="Garnett J."/>
            <person name="Gay L."/>
            <person name="Ghori M.R.J."/>
            <person name="Gibson R."/>
            <person name="Gilby L.M."/>
            <person name="Gillett W."/>
            <person name="Glithero R.J."/>
            <person name="Grafham D.V."/>
            <person name="Griffiths C."/>
            <person name="Griffiths-Jones S."/>
            <person name="Grocock R."/>
            <person name="Hammond S."/>
            <person name="Harrison E.S.I."/>
            <person name="Hart E."/>
            <person name="Haugen E."/>
            <person name="Heath P.D."/>
            <person name="Holmes S."/>
            <person name="Holt K."/>
            <person name="Howden P.J."/>
            <person name="Hunt A.R."/>
            <person name="Hunt S.E."/>
            <person name="Hunter G."/>
            <person name="Isherwood J."/>
            <person name="James R."/>
            <person name="Johnson C."/>
            <person name="Johnson D."/>
            <person name="Joy A."/>
            <person name="Kay M."/>
            <person name="Kershaw J.K."/>
            <person name="Kibukawa M."/>
            <person name="Kimberley A.M."/>
            <person name="King A."/>
            <person name="Knights A.J."/>
            <person name="Lad H."/>
            <person name="Laird G."/>
            <person name="Lawlor S."/>
            <person name="Leongamornlert D.A."/>
            <person name="Lloyd D.M."/>
            <person name="Loveland J."/>
            <person name="Lovell J."/>
            <person name="Lush M.J."/>
            <person name="Lyne R."/>
            <person name="Martin S."/>
            <person name="Mashreghi-Mohammadi M."/>
            <person name="Matthews L."/>
            <person name="Matthews N.S.W."/>
            <person name="McLaren S."/>
            <person name="Milne S."/>
            <person name="Mistry S."/>
            <person name="Moore M.J.F."/>
            <person name="Nickerson T."/>
            <person name="O'Dell C.N."/>
            <person name="Oliver K."/>
            <person name="Palmeiri A."/>
            <person name="Palmer S.A."/>
            <person name="Parker A."/>
            <person name="Patel D."/>
            <person name="Pearce A.V."/>
            <person name="Peck A.I."/>
            <person name="Pelan S."/>
            <person name="Phelps K."/>
            <person name="Phillimore B.J."/>
            <person name="Plumb R."/>
            <person name="Rajan J."/>
            <person name="Raymond C."/>
            <person name="Rouse G."/>
            <person name="Saenphimmachak C."/>
            <person name="Sehra H.K."/>
            <person name="Sheridan E."/>
            <person name="Shownkeen R."/>
            <person name="Sims S."/>
            <person name="Skuce C.D."/>
            <person name="Smith M."/>
            <person name="Steward C."/>
            <person name="Subramanian S."/>
            <person name="Sycamore N."/>
            <person name="Tracey A."/>
            <person name="Tromans A."/>
            <person name="Van Helmond Z."/>
            <person name="Wall M."/>
            <person name="Wallis J.M."/>
            <person name="White S."/>
            <person name="Whitehead S.L."/>
            <person name="Wilkinson J.E."/>
            <person name="Willey D.L."/>
            <person name="Williams H."/>
            <person name="Wilming L."/>
            <person name="Wray P.W."/>
            <person name="Wu Z."/>
            <person name="Coulson A."/>
            <person name="Vaudin M."/>
            <person name="Sulston J.E."/>
            <person name="Durbin R.M."/>
            <person name="Hubbard T."/>
            <person name="Wooster R."/>
            <person name="Dunham I."/>
            <person name="Carter N.P."/>
            <person name="McVean G."/>
            <person name="Ross M.T."/>
            <person name="Harrow J."/>
            <person name="Olson M.V."/>
            <person name="Beck S."/>
            <person name="Rogers J."/>
            <person name="Bentley D.R."/>
        </authorList>
    </citation>
    <scope>NUCLEOTIDE SEQUENCE [LARGE SCALE GENOMIC DNA]</scope>
</reference>
<reference key="4">
    <citation type="journal article" date="2004" name="Genome Res.">
        <title>The status, quality, and expansion of the NIH full-length cDNA project: the Mammalian Gene Collection (MGC).</title>
        <authorList>
            <consortium name="The MGC Project Team"/>
        </authorList>
    </citation>
    <scope>NUCLEOTIDE SEQUENCE [LARGE SCALE MRNA] (ISOFORM 2)</scope>
    <scope>VARIANTS ARG-60 AND ILE-246</scope>
    <source>
        <tissue>Testis</tissue>
    </source>
</reference>
<reference key="5">
    <citation type="journal article" date="1991" name="J. Invest. Dermatol.">
        <title>Human nidogen gene: structural and functional characterization of the 5'-flanking region.</title>
        <authorList>
            <person name="Fazio M.J."/>
            <person name="O'Leary J."/>
            <person name="Kahari V.M."/>
            <person name="Chen Y.Q."/>
            <person name="Saitta B."/>
            <person name="Uitto J."/>
        </authorList>
    </citation>
    <scope>NUCLEOTIDE SEQUENCE [GENOMIC DNA] OF 1-28</scope>
</reference>
<reference key="6">
    <citation type="submission" date="2005-03" db="EMBL/GenBank/DDBJ databases">
        <authorList>
            <person name="Totoki Y."/>
            <person name="Toyoda A."/>
            <person name="Takeda T."/>
            <person name="Sakaki Y."/>
            <person name="Tanaka A."/>
            <person name="Yokoyama S."/>
            <person name="Ohara O."/>
            <person name="Nagase T."/>
            <person name="Kikuno R.F."/>
        </authorList>
    </citation>
    <scope>NUCLEOTIDE SEQUENCE [LARGE SCALE MRNA] OF 2-1247 (ISOFORM 2)</scope>
    <scope>VARIANTS ILE-246 AND HIS-807</scope>
    <source>
        <tissue>Brain</tissue>
    </source>
</reference>
<reference key="7">
    <citation type="journal article" date="1989" name="Am. J. Hum. Genet.">
        <title>Human nidogen: cDNA cloning, cellular expression, and mapping of the gene to chromosome 1q43.</title>
        <authorList>
            <person name="Olsen D.R."/>
            <person name="Nagayoshi T."/>
            <person name="Fazio M."/>
            <person name="Mattei M.-G."/>
            <person name="Passage E."/>
            <person name="Weil D."/>
            <person name="Timpl R."/>
            <person name="Chu M.-L."/>
            <person name="Uitto J."/>
        </authorList>
    </citation>
    <scope>NUCLEOTIDE SEQUENCE [MRNA] OF 667-1247 (ISOFORM 1)</scope>
    <scope>VARIANT ARG-1246</scope>
    <source>
        <tissue>Placenta</tissue>
    </source>
</reference>
<reference key="8">
    <citation type="journal article" date="2006" name="FEBS Lett.">
        <title>Identification of the basement membrane protein nidogen as a candidate ligand for tumor endothelial marker 7 in vitro and in vivo.</title>
        <authorList>
            <person name="Lee H.K."/>
            <person name="Seo I.A."/>
            <person name="Park H.K."/>
            <person name="Park H.T."/>
        </authorList>
    </citation>
    <scope>INTERACTION WITH PLXDC1</scope>
</reference>
<reference key="9">
    <citation type="journal article" date="2014" name="J. Proteomics">
        <title>An enzyme assisted RP-RPLC approach for in-depth analysis of human liver phosphoproteome.</title>
        <authorList>
            <person name="Bian Y."/>
            <person name="Song C."/>
            <person name="Cheng K."/>
            <person name="Dong M."/>
            <person name="Wang F."/>
            <person name="Huang J."/>
            <person name="Sun D."/>
            <person name="Wang L."/>
            <person name="Ye M."/>
            <person name="Zou H."/>
        </authorList>
    </citation>
    <scope>IDENTIFICATION BY MASS SPECTROMETRY [LARGE SCALE ANALYSIS]</scope>
    <source>
        <tissue>Liver</tissue>
    </source>
</reference>
<reference key="10">
    <citation type="journal article" date="2006" name="Science">
        <title>The consensus coding sequences of human breast and colorectal cancers.</title>
        <authorList>
            <person name="Sjoeblom T."/>
            <person name="Jones S."/>
            <person name="Wood L.D."/>
            <person name="Parsons D.W."/>
            <person name="Lin J."/>
            <person name="Barber T.D."/>
            <person name="Mandelker D."/>
            <person name="Leary R.J."/>
            <person name="Ptak J."/>
            <person name="Silliman N."/>
            <person name="Szabo S."/>
            <person name="Buckhaults P."/>
            <person name="Farrell C."/>
            <person name="Meeh P."/>
            <person name="Markowitz S.D."/>
            <person name="Willis J."/>
            <person name="Dawson D."/>
            <person name="Willson J.K.V."/>
            <person name="Gazdar A.F."/>
            <person name="Hartigan J."/>
            <person name="Wu L."/>
            <person name="Liu C."/>
            <person name="Parmigiani G."/>
            <person name="Park B.H."/>
            <person name="Bachman K.E."/>
            <person name="Papadopoulos N."/>
            <person name="Vogelstein B."/>
            <person name="Kinzler K.W."/>
            <person name="Velculescu V.E."/>
        </authorList>
    </citation>
    <scope>VARIANT [LARGE SCALE ANALYSIS] SER-1036</scope>
</reference>
<organism>
    <name type="scientific">Homo sapiens</name>
    <name type="common">Human</name>
    <dbReference type="NCBI Taxonomy" id="9606"/>
    <lineage>
        <taxon>Eukaryota</taxon>
        <taxon>Metazoa</taxon>
        <taxon>Chordata</taxon>
        <taxon>Craniata</taxon>
        <taxon>Vertebrata</taxon>
        <taxon>Euteleostomi</taxon>
        <taxon>Mammalia</taxon>
        <taxon>Eutheria</taxon>
        <taxon>Euarchontoglires</taxon>
        <taxon>Primates</taxon>
        <taxon>Haplorrhini</taxon>
        <taxon>Catarrhini</taxon>
        <taxon>Hominidae</taxon>
        <taxon>Homo</taxon>
    </lineage>
</organism>
<gene>
    <name type="primary">NID1</name>
    <name type="synonym">NID</name>
</gene>
<accession>P14543</accession>
<accession>Q14942</accession>
<accession>Q59FL2</accession>
<accession>Q5TAF2</accession>
<accession>Q5TAF3</accession>
<accession>Q86XD7</accession>
<sequence length="1247" mass="136377">MLASSSRIRAAWTRALLLPLLLAGPVGCLSRQELFPFGPGQGDLELEDGDDFVSPALELSGALRFYDRSDIDAVYVTTNGIIATSEPPAKESHPGLFPPTFGAVAPFLADLDTTDGLGKVYYREDLSPSITQRAAECVHRGFPEISFQPSSAVVVTWESVAPYQGPSRDPDQKGKRNTFQAVLASSDSSSYAIFLYPEDGLQFHTTFSKKENNQVPAVVAFSQGSVGFLWKSNGAYNIFANDRESVENLAKSSNSGQQGVWVFEIGSPATTNGVVPADVILGTEDGAEYDDEDEDYDLATTRLGLEDVGTTPFSYKALRRGGADTYSVPSVLSPRRAATERPLGPPTERTRSFQLAVETFHQQHPQVIDVDEVEETGVVFSYNTDSRQTCANNRHQCSVHAECRDYATGFCCSCVAGYTGNGRQCVAEGSPQRVNGKVKGRIFVGSSQVPIVFENTDLHSYVVMNHGRSYTAISTIPETVGYSLLPLAPVGGIIGWMFAVEQDGFKNGFSITGGEFTRQAEVTFVGHPGNLVIKQRFSGIDEHGHLTIDTELEGRVPQIPFGSSVHIEPYTELYHYSTSVITSSSTREYTVTEPERDGASPSRIYTYQWRQTITFQECVHDDSRPALPSTQQLSVDSVFVLYNQEEKILRYALSNSIGPVREGSPDALQNPCYIGTHGCDTNAACRPGPRTQFTCECSIGFRGDGRTCYDIDECSEQPSVCGSHTICNNHPGTFRCECVEGYQFSDEGTCVAVVDQRPINYCETGLHNCDIPQRAQCIYTGGSSYTCSCLPGFSGDGQACQDVDECQPSRCHPDAFCYNTPGSFTCQCKPGYQGDGFRCVPGEVEKTRCQHEREHILGAAGATDPQRPIPPGLFVPECDAHGHYAPTQCHGSTGYCWCVDRDGREVEGTRTRPGMTPPCLSTVAPPIHQGPAVPTAVIPLPPGTHLLFAQTGKIERLPLEGNTMRKTEAKAFLHVPAKVIIGLAFDCVDKMVYWTDITEPSIGRASLHGGEPTTIIRQDLGSPEGIAVDHLGRNIFWTDSNLDRIEVAKLDGTQRRVLFETDLVNPRGIVTDSVRGNLYWTDWNRDNPKIETSYMDGTNRRILVQDDLGLPNGLTFDAFSSQLCWVDAGTNRAECLNPSQPSRRKALEGLQYPFAVTSYGKNLYFTDWKMNSVVALDLAISKETDAFQPHKQTRLYGITTALSQCPQGHNYCSVNNGGCTHLCLATPGSRTCRCPDNTLGVDCIEQK</sequence>